<comment type="function">
    <text evidence="1">Component of the NOP7 complex, which is required for maturation of the 25S and 5.8S ribosomal RNAs and formation of the 60S ribosome.</text>
</comment>
<comment type="subunit">
    <text evidence="1">Component of the NOP7 complex, composed of ERB1, NOP7 and YTM1. The complex is held together by ERB1, which interacts with NOP7 via its N-terminal domain and with YTM1 via a high-affinity interaction between the seven-bladed beta-propeller domains of the 2 proteins. The NOP7 complex associates with the 66S pre-ribosome.</text>
</comment>
<comment type="subcellular location">
    <subcellularLocation>
        <location evidence="1">Nucleus</location>
        <location evidence="1">Nucleolus</location>
    </subcellularLocation>
    <subcellularLocation>
        <location evidence="1">Nucleus</location>
        <location evidence="1">Nucleoplasm</location>
    </subcellularLocation>
</comment>
<comment type="similarity">
    <text evidence="1">Belongs to the WD repeat BOP1/ERB1 family.</text>
</comment>
<evidence type="ECO:0000255" key="1">
    <source>
        <dbReference type="HAMAP-Rule" id="MF_03027"/>
    </source>
</evidence>
<evidence type="ECO:0000256" key="2">
    <source>
        <dbReference type="SAM" id="MobiDB-lite"/>
    </source>
</evidence>
<organism>
    <name type="scientific">Cryptococcus neoformans var. neoformans serotype D (strain JEC21 / ATCC MYA-565)</name>
    <name type="common">Filobasidiella neoformans</name>
    <dbReference type="NCBI Taxonomy" id="214684"/>
    <lineage>
        <taxon>Eukaryota</taxon>
        <taxon>Fungi</taxon>
        <taxon>Dikarya</taxon>
        <taxon>Basidiomycota</taxon>
        <taxon>Agaricomycotina</taxon>
        <taxon>Tremellomycetes</taxon>
        <taxon>Tremellales</taxon>
        <taxon>Cryptococcaceae</taxon>
        <taxon>Cryptococcus</taxon>
        <taxon>Cryptococcus neoformans species complex</taxon>
    </lineage>
</organism>
<protein>
    <recommendedName>
        <fullName evidence="1">Ribosome biogenesis protein ERB1</fullName>
    </recommendedName>
    <alternativeName>
        <fullName evidence="1">Eukaryotic ribosome biogenesis protein 1</fullName>
    </alternativeName>
</protein>
<sequence>MAPQPLKVGTSKLSKMVKSAPKTAGKAKKRAVEQVSEESDEEFGDQGSGIDMSDDEEEVDGDDEEDEDEAFPEFDSELEDNDQEEASDEEQDEQDTSDESEIVEEDSDSESGYNTSDIERMYASDDDLSSEENKDLPVDEKLSRLIAKNTVKPDDSIGTDDKISRAKEGVGRLVPSKHVKGSFVREYDEYEAGYGSESSTEDNPNTVGNIPMEWYDDLPHIGYDVNGRKIFRPLQGDELDKFLANVEDPSAWTSAEDKLLQQNVQLSDKELDIIRRLERAENPDADFDPYQPTIEWFTGEGKERVMPLSAAPEPKRRFVPSKWEHKKIMKIVKAIREGRIIPNKPSAEKPRFYPIWSDADQHNPHVMYMPAPQLPPPKTAESYNPPEEYLPTEEEKAEWEAMDKEDRKTDFLPEKYDALRKVPGYKNLVQEKFERCLDLYLAPRTRRVKLNIDPDSLIPKLPAPKELKPFPIASTVQYRHPGDTRVRSVSTSPDGQWIASGSEDGVVRVWDLGNGREVWRWDLHAGPIQYVEWSPSREESLLVALVAGKIAVLSPLALVAPHIAAQTLTHSNTAFATSSATTKQGAGNEVKGIESVKWTRPSERERERGVLVYVEVPGTPKQVTWHRKGDYFATVASDAANKSVLIHQLSRHGSQSPFRKTPGTIQRVAFHPSKPHFFAATQRYIRLYDLAAQKLIRTLQSGVKWISSMDVHSGGDNLIIGSYDKKLAWFDMDLSAKPYKTLRYHNRALRSVAYHPTLPLFASASDDGTVHIFHCTVYTDLMQNPLIVPLKILRGHKVIDGIGVLDLRWVPGKPWLVSSGADGEVRLWCS</sequence>
<dbReference type="EMBL" id="AE017342">
    <property type="protein sequence ID" value="AAW41647.1"/>
    <property type="molecule type" value="Genomic_DNA"/>
</dbReference>
<dbReference type="RefSeq" id="XP_568954.1">
    <property type="nucleotide sequence ID" value="XM_568954.1"/>
</dbReference>
<dbReference type="SMR" id="P0CS34"/>
<dbReference type="FunCoup" id="P0CS34">
    <property type="interactions" value="457"/>
</dbReference>
<dbReference type="STRING" id="214684.P0CS34"/>
<dbReference type="PaxDb" id="214684-P0CS34"/>
<dbReference type="EnsemblFungi" id="AAW41647">
    <property type="protein sequence ID" value="AAW41647"/>
    <property type="gene ID" value="CNB04640"/>
</dbReference>
<dbReference type="GeneID" id="3256036"/>
<dbReference type="KEGG" id="cne:CNB04640"/>
<dbReference type="VEuPathDB" id="FungiDB:CNB04640"/>
<dbReference type="eggNOG" id="KOG0650">
    <property type="taxonomic scope" value="Eukaryota"/>
</dbReference>
<dbReference type="HOGENOM" id="CLU_011390_0_1_1"/>
<dbReference type="InParanoid" id="P0CS34"/>
<dbReference type="OMA" id="MRPAKGE"/>
<dbReference type="OrthoDB" id="5571054at2759"/>
<dbReference type="Proteomes" id="UP000002149">
    <property type="component" value="Chromosome 2"/>
</dbReference>
<dbReference type="GO" id="GO:0005654">
    <property type="term" value="C:nucleoplasm"/>
    <property type="evidence" value="ECO:0007669"/>
    <property type="project" value="UniProtKB-SubCell"/>
</dbReference>
<dbReference type="GO" id="GO:0070545">
    <property type="term" value="C:PeBoW complex"/>
    <property type="evidence" value="ECO:0000318"/>
    <property type="project" value="GO_Central"/>
</dbReference>
<dbReference type="GO" id="GO:0030687">
    <property type="term" value="C:preribosome, large subunit precursor"/>
    <property type="evidence" value="ECO:0000318"/>
    <property type="project" value="GO_Central"/>
</dbReference>
<dbReference type="GO" id="GO:0070180">
    <property type="term" value="F:large ribosomal subunit rRNA binding"/>
    <property type="evidence" value="ECO:0007669"/>
    <property type="project" value="EnsemblFungi"/>
</dbReference>
<dbReference type="GO" id="GO:0043021">
    <property type="term" value="F:ribonucleoprotein complex binding"/>
    <property type="evidence" value="ECO:0000318"/>
    <property type="project" value="GO_Central"/>
</dbReference>
<dbReference type="GO" id="GO:0000466">
    <property type="term" value="P:maturation of 5.8S rRNA from tricistronic rRNA transcript (SSU-rRNA, 5.8S rRNA, LSU-rRNA)"/>
    <property type="evidence" value="ECO:0007669"/>
    <property type="project" value="UniProtKB-UniRule"/>
</dbReference>
<dbReference type="GO" id="GO:0000463">
    <property type="term" value="P:maturation of LSU-rRNA from tricistronic rRNA transcript (SSU-rRNA, 5.8S rRNA, LSU-rRNA)"/>
    <property type="evidence" value="ECO:0000318"/>
    <property type="project" value="GO_Central"/>
</dbReference>
<dbReference type="FunFam" id="2.130.10.10:FF:000576">
    <property type="entry name" value="Ribosome biogenesis protein ERB1"/>
    <property type="match status" value="1"/>
</dbReference>
<dbReference type="Gene3D" id="2.130.10.10">
    <property type="entry name" value="YVTN repeat-like/Quinoprotein amine dehydrogenase"/>
    <property type="match status" value="1"/>
</dbReference>
<dbReference type="HAMAP" id="MF_03027">
    <property type="entry name" value="BOP1"/>
    <property type="match status" value="1"/>
</dbReference>
<dbReference type="InterPro" id="IPR028598">
    <property type="entry name" value="BOP1/Erb1"/>
</dbReference>
<dbReference type="InterPro" id="IPR012953">
    <property type="entry name" value="BOP1_N_dom"/>
</dbReference>
<dbReference type="InterPro" id="IPR015943">
    <property type="entry name" value="WD40/YVTN_repeat-like_dom_sf"/>
</dbReference>
<dbReference type="InterPro" id="IPR019775">
    <property type="entry name" value="WD40_repeat_CS"/>
</dbReference>
<dbReference type="InterPro" id="IPR036322">
    <property type="entry name" value="WD40_repeat_dom_sf"/>
</dbReference>
<dbReference type="InterPro" id="IPR001680">
    <property type="entry name" value="WD40_rpt"/>
</dbReference>
<dbReference type="PANTHER" id="PTHR17605:SF0">
    <property type="entry name" value="RIBOSOME BIOGENESIS PROTEIN BOP1"/>
    <property type="match status" value="1"/>
</dbReference>
<dbReference type="PANTHER" id="PTHR17605">
    <property type="entry name" value="RIBOSOME BIOGENESIS PROTEIN BOP1 BLOCK OF PROLIFERATION 1 PROTEIN"/>
    <property type="match status" value="1"/>
</dbReference>
<dbReference type="Pfam" id="PF08145">
    <property type="entry name" value="BOP1NT"/>
    <property type="match status" value="1"/>
</dbReference>
<dbReference type="Pfam" id="PF00400">
    <property type="entry name" value="WD40"/>
    <property type="match status" value="3"/>
</dbReference>
<dbReference type="SMART" id="SM01035">
    <property type="entry name" value="BOP1NT"/>
    <property type="match status" value="1"/>
</dbReference>
<dbReference type="SMART" id="SM00320">
    <property type="entry name" value="WD40"/>
    <property type="match status" value="6"/>
</dbReference>
<dbReference type="SUPFAM" id="SSF50978">
    <property type="entry name" value="WD40 repeat-like"/>
    <property type="match status" value="1"/>
</dbReference>
<dbReference type="PROSITE" id="PS00678">
    <property type="entry name" value="WD_REPEATS_1"/>
    <property type="match status" value="1"/>
</dbReference>
<dbReference type="PROSITE" id="PS50082">
    <property type="entry name" value="WD_REPEATS_2"/>
    <property type="match status" value="3"/>
</dbReference>
<dbReference type="PROSITE" id="PS50294">
    <property type="entry name" value="WD_REPEATS_REGION"/>
    <property type="match status" value="2"/>
</dbReference>
<proteinExistence type="inferred from homology"/>
<keyword id="KW-0539">Nucleus</keyword>
<keyword id="KW-1185">Reference proteome</keyword>
<keyword id="KW-0677">Repeat</keyword>
<keyword id="KW-0690">Ribosome biogenesis</keyword>
<keyword id="KW-0698">rRNA processing</keyword>
<keyword id="KW-0853">WD repeat</keyword>
<reference key="1">
    <citation type="journal article" date="2005" name="Science">
        <title>The genome of the basidiomycetous yeast and human pathogen Cryptococcus neoformans.</title>
        <authorList>
            <person name="Loftus B.J."/>
            <person name="Fung E."/>
            <person name="Roncaglia P."/>
            <person name="Rowley D."/>
            <person name="Amedeo P."/>
            <person name="Bruno D."/>
            <person name="Vamathevan J."/>
            <person name="Miranda M."/>
            <person name="Anderson I.J."/>
            <person name="Fraser J.A."/>
            <person name="Allen J.E."/>
            <person name="Bosdet I.E."/>
            <person name="Brent M.R."/>
            <person name="Chiu R."/>
            <person name="Doering T.L."/>
            <person name="Donlin M.J."/>
            <person name="D'Souza C.A."/>
            <person name="Fox D.S."/>
            <person name="Grinberg V."/>
            <person name="Fu J."/>
            <person name="Fukushima M."/>
            <person name="Haas B.J."/>
            <person name="Huang J.C."/>
            <person name="Janbon G."/>
            <person name="Jones S.J.M."/>
            <person name="Koo H.L."/>
            <person name="Krzywinski M.I."/>
            <person name="Kwon-Chung K.J."/>
            <person name="Lengeler K.B."/>
            <person name="Maiti R."/>
            <person name="Marra M.A."/>
            <person name="Marra R.E."/>
            <person name="Mathewson C.A."/>
            <person name="Mitchell T.G."/>
            <person name="Pertea M."/>
            <person name="Riggs F.R."/>
            <person name="Salzberg S.L."/>
            <person name="Schein J.E."/>
            <person name="Shvartsbeyn A."/>
            <person name="Shin H."/>
            <person name="Shumway M."/>
            <person name="Specht C.A."/>
            <person name="Suh B.B."/>
            <person name="Tenney A."/>
            <person name="Utterback T.R."/>
            <person name="Wickes B.L."/>
            <person name="Wortman J.R."/>
            <person name="Wye N.H."/>
            <person name="Kronstad J.W."/>
            <person name="Lodge J.K."/>
            <person name="Heitman J."/>
            <person name="Davis R.W."/>
            <person name="Fraser C.M."/>
            <person name="Hyman R.W."/>
        </authorList>
    </citation>
    <scope>NUCLEOTIDE SEQUENCE [LARGE SCALE GENOMIC DNA]</scope>
    <source>
        <strain>JEC21 / ATCC MYA-565</strain>
    </source>
</reference>
<feature type="chain" id="PRO_0000370428" description="Ribosome biogenesis protein ERB1">
    <location>
        <begin position="1"/>
        <end position="830"/>
    </location>
</feature>
<feature type="repeat" description="WD 1">
    <location>
        <begin position="481"/>
        <end position="520"/>
    </location>
</feature>
<feature type="repeat" description="WD 2">
    <location>
        <begin position="523"/>
        <end position="563"/>
    </location>
</feature>
<feature type="repeat" description="WD 3">
    <location>
        <begin position="660"/>
        <end position="698"/>
    </location>
</feature>
<feature type="repeat" description="WD 4">
    <location>
        <begin position="701"/>
        <end position="740"/>
    </location>
</feature>
<feature type="repeat" description="WD 5">
    <location>
        <begin position="744"/>
        <end position="783"/>
    </location>
</feature>
<feature type="repeat" description="WD 6">
    <location>
        <begin position="799"/>
        <end position="830"/>
    </location>
</feature>
<feature type="region of interest" description="Disordered" evidence="2">
    <location>
        <begin position="1"/>
        <end position="142"/>
    </location>
</feature>
<feature type="compositionally biased region" description="Acidic residues" evidence="2">
    <location>
        <begin position="35"/>
        <end position="44"/>
    </location>
</feature>
<feature type="compositionally biased region" description="Acidic residues" evidence="2">
    <location>
        <begin position="52"/>
        <end position="109"/>
    </location>
</feature>
<feature type="compositionally biased region" description="Basic and acidic residues" evidence="2">
    <location>
        <begin position="131"/>
        <end position="142"/>
    </location>
</feature>
<accession>P0CS34</accession>
<accession>Q55YA2</accession>
<accession>Q5KLN6</accession>
<gene>
    <name evidence="1" type="primary">ERB1</name>
    <name type="ordered locus">CNB04640</name>
</gene>
<name>ERB1_CRYNJ</name>